<sequence length="188" mass="20267">MLQLHPSDIKDIVLNGGVIAYPTEAVYGLGCDPDNDTAIQKLLAVKQRPWQKGLILVASDFQQLLAYVDESQLTAEQLEFAFSKWPGPFTFVMPIKAQVSKYLCGEFDSIAVRVSAHAGVQALCRALNKPLVSTSANLAGEDPALTAAEILADFTGKIDALVLGELGEQRQPSTIIDARSGKILRNGQ</sequence>
<gene>
    <name evidence="1" type="primary">tsaC</name>
    <name type="synonym">rimN</name>
    <name type="ordered locus">Sputcn32_0029</name>
</gene>
<dbReference type="EC" id="2.7.7.87" evidence="1"/>
<dbReference type="EMBL" id="CP000681">
    <property type="protein sequence ID" value="ABP73765.1"/>
    <property type="molecule type" value="Genomic_DNA"/>
</dbReference>
<dbReference type="SMR" id="A4Y1D2"/>
<dbReference type="STRING" id="319224.Sputcn32_0029"/>
<dbReference type="KEGG" id="spc:Sputcn32_0029"/>
<dbReference type="eggNOG" id="COG0009">
    <property type="taxonomic scope" value="Bacteria"/>
</dbReference>
<dbReference type="HOGENOM" id="CLU_031397_6_0_6"/>
<dbReference type="GO" id="GO:0005737">
    <property type="term" value="C:cytoplasm"/>
    <property type="evidence" value="ECO:0007669"/>
    <property type="project" value="UniProtKB-SubCell"/>
</dbReference>
<dbReference type="GO" id="GO:0005524">
    <property type="term" value="F:ATP binding"/>
    <property type="evidence" value="ECO:0007669"/>
    <property type="project" value="UniProtKB-UniRule"/>
</dbReference>
<dbReference type="GO" id="GO:0003725">
    <property type="term" value="F:double-stranded RNA binding"/>
    <property type="evidence" value="ECO:0007669"/>
    <property type="project" value="InterPro"/>
</dbReference>
<dbReference type="GO" id="GO:0061710">
    <property type="term" value="F:L-threonylcarbamoyladenylate synthase"/>
    <property type="evidence" value="ECO:0007669"/>
    <property type="project" value="UniProtKB-EC"/>
</dbReference>
<dbReference type="GO" id="GO:0000049">
    <property type="term" value="F:tRNA binding"/>
    <property type="evidence" value="ECO:0007669"/>
    <property type="project" value="TreeGrafter"/>
</dbReference>
<dbReference type="GO" id="GO:0006450">
    <property type="term" value="P:regulation of translational fidelity"/>
    <property type="evidence" value="ECO:0007669"/>
    <property type="project" value="TreeGrafter"/>
</dbReference>
<dbReference type="GO" id="GO:0002949">
    <property type="term" value="P:tRNA threonylcarbamoyladenosine modification"/>
    <property type="evidence" value="ECO:0007669"/>
    <property type="project" value="UniProtKB-UniRule"/>
</dbReference>
<dbReference type="FunFam" id="3.90.870.10:FF:000004">
    <property type="entry name" value="Threonylcarbamoyl-AMP synthase"/>
    <property type="match status" value="1"/>
</dbReference>
<dbReference type="Gene3D" id="3.90.870.10">
    <property type="entry name" value="DHBP synthase"/>
    <property type="match status" value="1"/>
</dbReference>
<dbReference type="HAMAP" id="MF_01852">
    <property type="entry name" value="TsaC"/>
    <property type="match status" value="1"/>
</dbReference>
<dbReference type="InterPro" id="IPR017945">
    <property type="entry name" value="DHBP_synth_RibB-like_a/b_dom"/>
</dbReference>
<dbReference type="InterPro" id="IPR006070">
    <property type="entry name" value="Sua5-like_dom"/>
</dbReference>
<dbReference type="InterPro" id="IPR023535">
    <property type="entry name" value="TC-AMP_synthase"/>
</dbReference>
<dbReference type="InterPro" id="IPR050156">
    <property type="entry name" value="TC-AMP_synthase_SUA5"/>
</dbReference>
<dbReference type="NCBIfam" id="TIGR00057">
    <property type="entry name" value="L-threonylcarbamoyladenylate synthase"/>
    <property type="match status" value="1"/>
</dbReference>
<dbReference type="PANTHER" id="PTHR17490">
    <property type="entry name" value="SUA5"/>
    <property type="match status" value="1"/>
</dbReference>
<dbReference type="PANTHER" id="PTHR17490:SF18">
    <property type="entry name" value="THREONYLCARBAMOYL-AMP SYNTHASE"/>
    <property type="match status" value="1"/>
</dbReference>
<dbReference type="Pfam" id="PF01300">
    <property type="entry name" value="Sua5_yciO_yrdC"/>
    <property type="match status" value="1"/>
</dbReference>
<dbReference type="SUPFAM" id="SSF55821">
    <property type="entry name" value="YrdC/RibB"/>
    <property type="match status" value="1"/>
</dbReference>
<dbReference type="PROSITE" id="PS51163">
    <property type="entry name" value="YRDC"/>
    <property type="match status" value="1"/>
</dbReference>
<proteinExistence type="inferred from homology"/>
<keyword id="KW-0067">ATP-binding</keyword>
<keyword id="KW-0963">Cytoplasm</keyword>
<keyword id="KW-0547">Nucleotide-binding</keyword>
<keyword id="KW-0548">Nucleotidyltransferase</keyword>
<keyword id="KW-0808">Transferase</keyword>
<keyword id="KW-0819">tRNA processing</keyword>
<evidence type="ECO:0000255" key="1">
    <source>
        <dbReference type="HAMAP-Rule" id="MF_01852"/>
    </source>
</evidence>
<accession>A4Y1D2</accession>
<reference key="1">
    <citation type="submission" date="2007-04" db="EMBL/GenBank/DDBJ databases">
        <title>Complete sequence of Shewanella putrefaciens CN-32.</title>
        <authorList>
            <consortium name="US DOE Joint Genome Institute"/>
            <person name="Copeland A."/>
            <person name="Lucas S."/>
            <person name="Lapidus A."/>
            <person name="Barry K."/>
            <person name="Detter J.C."/>
            <person name="Glavina del Rio T."/>
            <person name="Hammon N."/>
            <person name="Israni S."/>
            <person name="Dalin E."/>
            <person name="Tice H."/>
            <person name="Pitluck S."/>
            <person name="Chain P."/>
            <person name="Malfatti S."/>
            <person name="Shin M."/>
            <person name="Vergez L."/>
            <person name="Schmutz J."/>
            <person name="Larimer F."/>
            <person name="Land M."/>
            <person name="Hauser L."/>
            <person name="Kyrpides N."/>
            <person name="Mikhailova N."/>
            <person name="Romine M.F."/>
            <person name="Fredrickson J."/>
            <person name="Tiedje J."/>
            <person name="Richardson P."/>
        </authorList>
    </citation>
    <scope>NUCLEOTIDE SEQUENCE [LARGE SCALE GENOMIC DNA]</scope>
    <source>
        <strain>CN-32 / ATCC BAA-453</strain>
    </source>
</reference>
<protein>
    <recommendedName>
        <fullName evidence="1">Threonylcarbamoyl-AMP synthase</fullName>
        <shortName evidence="1">TC-AMP synthase</shortName>
        <ecNumber evidence="1">2.7.7.87</ecNumber>
    </recommendedName>
    <alternativeName>
        <fullName evidence="1">L-threonylcarbamoyladenylate synthase</fullName>
    </alternativeName>
    <alternativeName>
        <fullName evidence="1">t(6)A37 threonylcarbamoyladenosine biosynthesis protein TsaC</fullName>
    </alternativeName>
    <alternativeName>
        <fullName evidence="1">tRNA threonylcarbamoyladenosine biosynthesis protein TsaC</fullName>
    </alternativeName>
</protein>
<comment type="function">
    <text evidence="1">Required for the formation of a threonylcarbamoyl group on adenosine at position 37 (t(6)A37) in tRNAs that read codons beginning with adenine. Catalyzes the conversion of L-threonine, HCO(3)(-)/CO(2) and ATP to give threonylcarbamoyl-AMP (TC-AMP) as the acyladenylate intermediate, with the release of diphosphate.</text>
</comment>
<comment type="catalytic activity">
    <reaction evidence="1">
        <text>L-threonine + hydrogencarbonate + ATP = L-threonylcarbamoyladenylate + diphosphate + H2O</text>
        <dbReference type="Rhea" id="RHEA:36407"/>
        <dbReference type="ChEBI" id="CHEBI:15377"/>
        <dbReference type="ChEBI" id="CHEBI:17544"/>
        <dbReference type="ChEBI" id="CHEBI:30616"/>
        <dbReference type="ChEBI" id="CHEBI:33019"/>
        <dbReference type="ChEBI" id="CHEBI:57926"/>
        <dbReference type="ChEBI" id="CHEBI:73682"/>
        <dbReference type="EC" id="2.7.7.87"/>
    </reaction>
</comment>
<comment type="subcellular location">
    <subcellularLocation>
        <location evidence="1">Cytoplasm</location>
    </subcellularLocation>
</comment>
<comment type="similarity">
    <text evidence="1">Belongs to the SUA5 family. TsaC subfamily.</text>
</comment>
<name>TSAC_SHEPC</name>
<organism>
    <name type="scientific">Shewanella putrefaciens (strain CN-32 / ATCC BAA-453)</name>
    <dbReference type="NCBI Taxonomy" id="319224"/>
    <lineage>
        <taxon>Bacteria</taxon>
        <taxon>Pseudomonadati</taxon>
        <taxon>Pseudomonadota</taxon>
        <taxon>Gammaproteobacteria</taxon>
        <taxon>Alteromonadales</taxon>
        <taxon>Shewanellaceae</taxon>
        <taxon>Shewanella</taxon>
    </lineage>
</organism>
<feature type="chain" id="PRO_0000352984" description="Threonylcarbamoyl-AMP synthase">
    <location>
        <begin position="1"/>
        <end position="188"/>
    </location>
</feature>
<feature type="domain" description="YrdC-like" evidence="1">
    <location>
        <begin position="3"/>
        <end position="188"/>
    </location>
</feature>